<accession>P60597</accession>
<name>HIS5_BDEBA</name>
<gene>
    <name evidence="1" type="primary">hisH</name>
    <name type="ordered locus">Bd1691</name>
</gene>
<sequence length="204" mass="22493">MIKIVDYGLGNIQAFANLYKRLHIPVVVARTADELAGATKIILPGVGAFDHAMARLNESGMREILESLVQKDKVPVLGICVGMQMLANSSDEGVLPGLGWVPGRVREFRNIPGLEGIAQPHMGWNDVKPVVSSGLFKGLETDARFYFLHSFFFECQNPDYSLASANYGLEFSCAVANRNVYGVQFHPEKSHDFGMTLLKNFSEI</sequence>
<evidence type="ECO:0000255" key="1">
    <source>
        <dbReference type="HAMAP-Rule" id="MF_00278"/>
    </source>
</evidence>
<reference key="1">
    <citation type="journal article" date="2004" name="Science">
        <title>A predator unmasked: life cycle of Bdellovibrio bacteriovorus from a genomic perspective.</title>
        <authorList>
            <person name="Rendulic S."/>
            <person name="Jagtap P."/>
            <person name="Rosinus A."/>
            <person name="Eppinger M."/>
            <person name="Baar C."/>
            <person name="Lanz C."/>
            <person name="Keller H."/>
            <person name="Lambert C."/>
            <person name="Evans K.J."/>
            <person name="Goesmann A."/>
            <person name="Meyer F."/>
            <person name="Sockett R.E."/>
            <person name="Schuster S.C."/>
        </authorList>
    </citation>
    <scope>NUCLEOTIDE SEQUENCE [LARGE SCALE GENOMIC DNA]</scope>
    <source>
        <strain>ATCC 15356 / DSM 50701 / NCIMB 9529 / HD100</strain>
    </source>
</reference>
<comment type="function">
    <text evidence="1">IGPS catalyzes the conversion of PRFAR and glutamine to IGP, AICAR and glutamate. The HisH subunit catalyzes the hydrolysis of glutamine to glutamate and ammonia as part of the synthesis of IGP and AICAR. The resulting ammonia molecule is channeled to the active site of HisF.</text>
</comment>
<comment type="catalytic activity">
    <reaction evidence="1">
        <text>5-[(5-phospho-1-deoxy-D-ribulos-1-ylimino)methylamino]-1-(5-phospho-beta-D-ribosyl)imidazole-4-carboxamide + L-glutamine = D-erythro-1-(imidazol-4-yl)glycerol 3-phosphate + 5-amino-1-(5-phospho-beta-D-ribosyl)imidazole-4-carboxamide + L-glutamate + H(+)</text>
        <dbReference type="Rhea" id="RHEA:24793"/>
        <dbReference type="ChEBI" id="CHEBI:15378"/>
        <dbReference type="ChEBI" id="CHEBI:29985"/>
        <dbReference type="ChEBI" id="CHEBI:58278"/>
        <dbReference type="ChEBI" id="CHEBI:58359"/>
        <dbReference type="ChEBI" id="CHEBI:58475"/>
        <dbReference type="ChEBI" id="CHEBI:58525"/>
        <dbReference type="EC" id="4.3.2.10"/>
    </reaction>
</comment>
<comment type="catalytic activity">
    <reaction evidence="1">
        <text>L-glutamine + H2O = L-glutamate + NH4(+)</text>
        <dbReference type="Rhea" id="RHEA:15889"/>
        <dbReference type="ChEBI" id="CHEBI:15377"/>
        <dbReference type="ChEBI" id="CHEBI:28938"/>
        <dbReference type="ChEBI" id="CHEBI:29985"/>
        <dbReference type="ChEBI" id="CHEBI:58359"/>
        <dbReference type="EC" id="3.5.1.2"/>
    </reaction>
</comment>
<comment type="pathway">
    <text evidence="1">Amino-acid biosynthesis; L-histidine biosynthesis; L-histidine from 5-phospho-alpha-D-ribose 1-diphosphate: step 5/9.</text>
</comment>
<comment type="subunit">
    <text evidence="1">Heterodimer of HisH and HisF.</text>
</comment>
<comment type="subcellular location">
    <subcellularLocation>
        <location evidence="1">Cytoplasm</location>
    </subcellularLocation>
</comment>
<protein>
    <recommendedName>
        <fullName evidence="1">Imidazole glycerol phosphate synthase subunit HisH</fullName>
        <ecNumber evidence="1">4.3.2.10</ecNumber>
    </recommendedName>
    <alternativeName>
        <fullName evidence="1">IGP synthase glutaminase subunit</fullName>
        <ecNumber evidence="1">3.5.1.2</ecNumber>
    </alternativeName>
    <alternativeName>
        <fullName evidence="1">IGP synthase subunit HisH</fullName>
    </alternativeName>
    <alternativeName>
        <fullName evidence="1">ImGP synthase subunit HisH</fullName>
        <shortName evidence="1">IGPS subunit HisH</shortName>
    </alternativeName>
</protein>
<proteinExistence type="inferred from homology"/>
<dbReference type="EC" id="4.3.2.10" evidence="1"/>
<dbReference type="EC" id="3.5.1.2" evidence="1"/>
<dbReference type="EMBL" id="BX842650">
    <property type="protein sequence ID" value="CAE79561.1"/>
    <property type="molecule type" value="Genomic_DNA"/>
</dbReference>
<dbReference type="RefSeq" id="WP_011164163.1">
    <property type="nucleotide sequence ID" value="NC_005363.1"/>
</dbReference>
<dbReference type="SMR" id="P60597"/>
<dbReference type="STRING" id="264462.Bd1691"/>
<dbReference type="MEROPS" id="C26.965"/>
<dbReference type="GeneID" id="93012674"/>
<dbReference type="KEGG" id="bba:Bd1691"/>
<dbReference type="eggNOG" id="COG0118">
    <property type="taxonomic scope" value="Bacteria"/>
</dbReference>
<dbReference type="HOGENOM" id="CLU_071837_2_0_7"/>
<dbReference type="UniPathway" id="UPA00031">
    <property type="reaction ID" value="UER00010"/>
</dbReference>
<dbReference type="Proteomes" id="UP000008080">
    <property type="component" value="Chromosome"/>
</dbReference>
<dbReference type="GO" id="GO:0005737">
    <property type="term" value="C:cytoplasm"/>
    <property type="evidence" value="ECO:0007669"/>
    <property type="project" value="UniProtKB-SubCell"/>
</dbReference>
<dbReference type="GO" id="GO:0004359">
    <property type="term" value="F:glutaminase activity"/>
    <property type="evidence" value="ECO:0007669"/>
    <property type="project" value="UniProtKB-EC"/>
</dbReference>
<dbReference type="GO" id="GO:0000107">
    <property type="term" value="F:imidazoleglycerol-phosphate synthase activity"/>
    <property type="evidence" value="ECO:0007669"/>
    <property type="project" value="UniProtKB-UniRule"/>
</dbReference>
<dbReference type="GO" id="GO:0016829">
    <property type="term" value="F:lyase activity"/>
    <property type="evidence" value="ECO:0007669"/>
    <property type="project" value="UniProtKB-KW"/>
</dbReference>
<dbReference type="GO" id="GO:0000105">
    <property type="term" value="P:L-histidine biosynthetic process"/>
    <property type="evidence" value="ECO:0007669"/>
    <property type="project" value="UniProtKB-UniRule"/>
</dbReference>
<dbReference type="CDD" id="cd01748">
    <property type="entry name" value="GATase1_IGP_Synthase"/>
    <property type="match status" value="1"/>
</dbReference>
<dbReference type="Gene3D" id="3.40.50.880">
    <property type="match status" value="1"/>
</dbReference>
<dbReference type="HAMAP" id="MF_00278">
    <property type="entry name" value="HisH"/>
    <property type="match status" value="1"/>
</dbReference>
<dbReference type="InterPro" id="IPR029062">
    <property type="entry name" value="Class_I_gatase-like"/>
</dbReference>
<dbReference type="InterPro" id="IPR017926">
    <property type="entry name" value="GATASE"/>
</dbReference>
<dbReference type="InterPro" id="IPR010139">
    <property type="entry name" value="Imidazole-glycPsynth_HisH"/>
</dbReference>
<dbReference type="NCBIfam" id="TIGR01855">
    <property type="entry name" value="IMP_synth_hisH"/>
    <property type="match status" value="1"/>
</dbReference>
<dbReference type="PANTHER" id="PTHR42701">
    <property type="entry name" value="IMIDAZOLE GLYCEROL PHOSPHATE SYNTHASE SUBUNIT HISH"/>
    <property type="match status" value="1"/>
</dbReference>
<dbReference type="PANTHER" id="PTHR42701:SF1">
    <property type="entry name" value="IMIDAZOLE GLYCEROL PHOSPHATE SYNTHASE SUBUNIT HISH"/>
    <property type="match status" value="1"/>
</dbReference>
<dbReference type="Pfam" id="PF00117">
    <property type="entry name" value="GATase"/>
    <property type="match status" value="1"/>
</dbReference>
<dbReference type="PIRSF" id="PIRSF000495">
    <property type="entry name" value="Amidotransf_hisH"/>
    <property type="match status" value="1"/>
</dbReference>
<dbReference type="SUPFAM" id="SSF52317">
    <property type="entry name" value="Class I glutamine amidotransferase-like"/>
    <property type="match status" value="1"/>
</dbReference>
<dbReference type="PROSITE" id="PS51273">
    <property type="entry name" value="GATASE_TYPE_1"/>
    <property type="match status" value="1"/>
</dbReference>
<organism>
    <name type="scientific">Bdellovibrio bacteriovorus (strain ATCC 15356 / DSM 50701 / NCIMB 9529 / HD100)</name>
    <dbReference type="NCBI Taxonomy" id="264462"/>
    <lineage>
        <taxon>Bacteria</taxon>
        <taxon>Pseudomonadati</taxon>
        <taxon>Bdellovibrionota</taxon>
        <taxon>Bdellovibrionia</taxon>
        <taxon>Bdellovibrionales</taxon>
        <taxon>Pseudobdellovibrionaceae</taxon>
        <taxon>Bdellovibrio</taxon>
    </lineage>
</organism>
<feature type="chain" id="PRO_0000152346" description="Imidazole glycerol phosphate synthase subunit HisH">
    <location>
        <begin position="1"/>
        <end position="204"/>
    </location>
</feature>
<feature type="domain" description="Glutamine amidotransferase type-1" evidence="1">
    <location>
        <begin position="1"/>
        <end position="204"/>
    </location>
</feature>
<feature type="active site" description="Nucleophile" evidence="1">
    <location>
        <position position="80"/>
    </location>
</feature>
<feature type="active site" evidence="1">
    <location>
        <position position="186"/>
    </location>
</feature>
<feature type="active site" evidence="1">
    <location>
        <position position="188"/>
    </location>
</feature>
<keyword id="KW-0028">Amino-acid biosynthesis</keyword>
<keyword id="KW-0963">Cytoplasm</keyword>
<keyword id="KW-0315">Glutamine amidotransferase</keyword>
<keyword id="KW-0368">Histidine biosynthesis</keyword>
<keyword id="KW-0378">Hydrolase</keyword>
<keyword id="KW-0456">Lyase</keyword>
<keyword id="KW-1185">Reference proteome</keyword>